<evidence type="ECO:0000255" key="1">
    <source>
        <dbReference type="PROSITE-ProRule" id="PRU00513"/>
    </source>
</evidence>
<evidence type="ECO:0000255" key="2">
    <source>
        <dbReference type="PROSITE-ProRule" id="PRU10059"/>
    </source>
</evidence>
<evidence type="ECO:0000255" key="3">
    <source>
        <dbReference type="PROSITE-ProRule" id="PRU10060"/>
    </source>
</evidence>
<evidence type="ECO:0000255" key="4">
    <source>
        <dbReference type="PROSITE-ProRule" id="PRU10140"/>
    </source>
</evidence>
<evidence type="ECO:0000256" key="5">
    <source>
        <dbReference type="SAM" id="MobiDB-lite"/>
    </source>
</evidence>
<evidence type="ECO:0000269" key="6">
    <source>
    </source>
</evidence>
<evidence type="ECO:0000305" key="7"/>
<evidence type="ECO:0007829" key="8">
    <source>
        <dbReference type="PDB" id="2XFG"/>
    </source>
</evidence>
<comment type="function">
    <text>This enzyme catalyzes the endohydrolysis of 1,4-beta-glucosidic linkages in cellulose, lichenin and cereal beta-D-glucans. Principally active against barley beta-glucan.</text>
</comment>
<comment type="catalytic activity">
    <reaction>
        <text>Endohydrolysis of (1-&gt;4)-beta-D-glucosidic linkages in cellulose, lichenin and cereal beta-D-glucans.</text>
        <dbReference type="EC" id="3.2.1.4"/>
    </reaction>
</comment>
<comment type="pathway">
    <text>Glycan metabolism; cellulose degradation.</text>
</comment>
<comment type="interaction">
    <interactant intactId="EBI-8601842">
        <id>Q02934</id>
    </interactant>
    <interactant intactId="EBI-8601842">
        <id>Q02934</id>
        <label>celI</label>
    </interactant>
    <organismsDiffer>false</organismsDiffer>
    <experiments>4</experiments>
</comment>
<comment type="similarity">
    <text evidence="4 7">Belongs to the glycosyl hydrolase 9 (cellulase E) family.</text>
</comment>
<reference key="1">
    <citation type="journal article" date="1993" name="J. Gen. Microbiol.">
        <title>Gene sequence and properties of CelI, a family E endoglucanase from Clostridium thermocellum.</title>
        <authorList>
            <person name="Hazlewood G.P."/>
            <person name="Davidson K."/>
            <person name="Laurie J.I."/>
            <person name="Huskisson N.S."/>
            <person name="Gilbert H.J."/>
        </authorList>
    </citation>
    <scope>NUCLEOTIDE SEQUENCE [GENOMIC DNA]</scope>
    <scope>PROTEIN SEQUENCE OF 56-69</scope>
</reference>
<reference key="2">
    <citation type="submission" date="2007-02" db="EMBL/GenBank/DDBJ databases">
        <title>Complete sequence of Clostridium thermocellum ATCC 27405.</title>
        <authorList>
            <consortium name="US DOE Joint Genome Institute"/>
            <person name="Copeland A."/>
            <person name="Lucas S."/>
            <person name="Lapidus A."/>
            <person name="Barry K."/>
            <person name="Detter J.C."/>
            <person name="Glavina del Rio T."/>
            <person name="Hammon N."/>
            <person name="Israni S."/>
            <person name="Dalin E."/>
            <person name="Tice H."/>
            <person name="Pitluck S."/>
            <person name="Chertkov O."/>
            <person name="Brettin T."/>
            <person name="Bruce D."/>
            <person name="Han C."/>
            <person name="Tapia R."/>
            <person name="Gilna P."/>
            <person name="Schmutz J."/>
            <person name="Larimer F."/>
            <person name="Land M."/>
            <person name="Hauser L."/>
            <person name="Kyrpides N."/>
            <person name="Mikhailova N."/>
            <person name="Wu J.H.D."/>
            <person name="Newcomb M."/>
            <person name="Richardson P."/>
        </authorList>
    </citation>
    <scope>NUCLEOTIDE SEQUENCE [LARGE SCALE GENOMIC DNA]</scope>
    <source>
        <strain>ATCC 27405 / DSM 1237 / JCM 9322 / NBRC 103400 / NCIMB 10682 / NRRL B-4536 / VPI 7372</strain>
    </source>
</reference>
<proteinExistence type="evidence at protein level"/>
<accession>Q02934</accession>
<accession>A3DBF2</accession>
<protein>
    <recommendedName>
        <fullName>Endoglucanase 1</fullName>
        <ecNumber>3.2.1.4</ecNumber>
    </recommendedName>
    <alternativeName>
        <fullName>Cellulase I</fullName>
    </alternativeName>
    <alternativeName>
        <fullName>Endo-1,4-beta-glucanase</fullName>
    </alternativeName>
    <alternativeName>
        <fullName>Endoglucanase I</fullName>
        <shortName>EGI</shortName>
    </alternativeName>
</protein>
<keyword id="KW-0002">3D-structure</keyword>
<keyword id="KW-0119">Carbohydrate metabolism</keyword>
<keyword id="KW-0136">Cellulose degradation</keyword>
<keyword id="KW-0903">Direct protein sequencing</keyword>
<keyword id="KW-0326">Glycosidase</keyword>
<keyword id="KW-0378">Hydrolase</keyword>
<keyword id="KW-0624">Polysaccharide degradation</keyword>
<keyword id="KW-1185">Reference proteome</keyword>
<keyword id="KW-0677">Repeat</keyword>
<keyword id="KW-0732">Signal</keyword>
<feature type="signal peptide" evidence="6">
    <location>
        <begin position="1"/>
        <end position="55"/>
    </location>
</feature>
<feature type="chain" id="PRO_0000007951" description="Endoglucanase 1">
    <location>
        <begin position="56"/>
        <end position="887"/>
    </location>
</feature>
<feature type="domain" description="CBM3 1" evidence="1">
    <location>
        <begin position="529"/>
        <end position="684"/>
    </location>
</feature>
<feature type="domain" description="CBM3 2" evidence="1">
    <location>
        <begin position="736"/>
        <end position="887"/>
    </location>
</feature>
<feature type="region of interest" description="Disordered" evidence="5">
    <location>
        <begin position="40"/>
        <end position="66"/>
    </location>
</feature>
<feature type="region of interest" description="Catalytic">
    <location>
        <begin position="56"/>
        <end position="518"/>
    </location>
</feature>
<feature type="region of interest" description="Disordered" evidence="5">
    <location>
        <begin position="441"/>
        <end position="460"/>
    </location>
</feature>
<feature type="region of interest" description="Disordered" evidence="5">
    <location>
        <begin position="684"/>
        <end position="730"/>
    </location>
</feature>
<feature type="compositionally biased region" description="Basic and acidic residues" evidence="5">
    <location>
        <begin position="43"/>
        <end position="53"/>
    </location>
</feature>
<feature type="compositionally biased region" description="Polar residues" evidence="5">
    <location>
        <begin position="686"/>
        <end position="729"/>
    </location>
</feature>
<feature type="active site" description="Nucleophile" evidence="4">
    <location>
        <position position="131"/>
    </location>
</feature>
<feature type="active site" evidence="2">
    <location>
        <position position="448"/>
    </location>
</feature>
<feature type="active site" evidence="3">
    <location>
        <position position="486"/>
    </location>
</feature>
<feature type="active site" evidence="3">
    <location>
        <position position="495"/>
    </location>
</feature>
<feature type="sequence conflict" description="In Ref. 1; AAA20892." evidence="7" ref="1">
    <original>NPSASDYTDWNRVTLYISNKLVYGKEP</original>
    <variation>KQACLRQRTLIYLYATWLR</variation>
    <location>
        <begin position="861"/>
        <end position="887"/>
    </location>
</feature>
<feature type="helix" evidence="8">
    <location>
        <begin position="78"/>
        <end position="91"/>
    </location>
</feature>
<feature type="turn" evidence="8">
    <location>
        <begin position="99"/>
        <end position="101"/>
    </location>
</feature>
<feature type="strand" evidence="8">
    <location>
        <begin position="103"/>
        <end position="106"/>
    </location>
</feature>
<feature type="turn" evidence="8">
    <location>
        <begin position="112"/>
        <end position="115"/>
    </location>
</feature>
<feature type="helix" evidence="8">
    <location>
        <begin position="116"/>
        <end position="118"/>
    </location>
</feature>
<feature type="strand" evidence="8">
    <location>
        <begin position="129"/>
        <end position="131"/>
    </location>
</feature>
<feature type="helix" evidence="8">
    <location>
        <begin position="136"/>
        <end position="152"/>
    </location>
</feature>
<feature type="helix" evidence="8">
    <location>
        <begin position="154"/>
        <end position="159"/>
    </location>
</feature>
<feature type="helix" evidence="8">
    <location>
        <begin position="163"/>
        <end position="179"/>
    </location>
</feature>
<feature type="strand" evidence="8">
    <location>
        <begin position="186"/>
        <end position="192"/>
    </location>
</feature>
<feature type="helix" evidence="8">
    <location>
        <begin position="194"/>
        <end position="198"/>
    </location>
</feature>
<feature type="helix" evidence="8">
    <location>
        <begin position="204"/>
        <end position="206"/>
    </location>
</feature>
<feature type="strand" evidence="8">
    <location>
        <begin position="213"/>
        <end position="220"/>
    </location>
</feature>
<feature type="helix" evidence="8">
    <location>
        <begin position="223"/>
        <end position="239"/>
    </location>
</feature>
<feature type="turn" evidence="8">
    <location>
        <begin position="240"/>
        <end position="243"/>
    </location>
</feature>
<feature type="helix" evidence="8">
    <location>
        <begin position="245"/>
        <end position="265"/>
    </location>
</feature>
<feature type="turn" evidence="8">
    <location>
        <begin position="273"/>
        <end position="277"/>
    </location>
</feature>
<feature type="helix" evidence="8">
    <location>
        <begin position="285"/>
        <end position="299"/>
    </location>
</feature>
<feature type="helix" evidence="8">
    <location>
        <begin position="302"/>
        <end position="310"/>
    </location>
</feature>
<feature type="turn" evidence="8">
    <location>
        <begin position="311"/>
        <end position="314"/>
    </location>
</feature>
<feature type="strand" evidence="8">
    <location>
        <begin position="321"/>
        <end position="324"/>
    </location>
</feature>
<feature type="helix" evidence="8">
    <location>
        <begin position="336"/>
        <end position="347"/>
    </location>
</feature>
<feature type="helix" evidence="8">
    <location>
        <begin position="352"/>
        <end position="364"/>
    </location>
</feature>
<feature type="strand" evidence="8">
    <location>
        <begin position="385"/>
        <end position="387"/>
    </location>
</feature>
<feature type="helix" evidence="8">
    <location>
        <begin position="388"/>
        <end position="403"/>
    </location>
</feature>
<feature type="helix" evidence="8">
    <location>
        <begin position="410"/>
        <end position="428"/>
    </location>
</feature>
<feature type="turn" evidence="8">
    <location>
        <begin position="429"/>
        <end position="431"/>
    </location>
</feature>
<feature type="strand" evidence="8">
    <location>
        <begin position="439"/>
        <end position="442"/>
    </location>
</feature>
<feature type="helix" evidence="8">
    <location>
        <begin position="450"/>
        <end position="453"/>
    </location>
</feature>
<feature type="strand" evidence="8">
    <location>
        <begin position="456"/>
        <end position="458"/>
    </location>
</feature>
<feature type="strand" evidence="8">
    <location>
        <begin position="462"/>
        <end position="465"/>
    </location>
</feature>
<feature type="helix" evidence="8">
    <location>
        <begin position="491"/>
        <end position="494"/>
    </location>
</feature>
<feature type="helix" evidence="8">
    <location>
        <begin position="498"/>
        <end position="515"/>
    </location>
</feature>
<feature type="strand" evidence="8">
    <location>
        <begin position="533"/>
        <end position="544"/>
    </location>
</feature>
<feature type="strand" evidence="8">
    <location>
        <begin position="547"/>
        <end position="556"/>
    </location>
</feature>
<feature type="strand" evidence="8">
    <location>
        <begin position="565"/>
        <end position="575"/>
    </location>
</feature>
<feature type="helix" evidence="8">
    <location>
        <begin position="577"/>
        <end position="580"/>
    </location>
</feature>
<feature type="turn" evidence="8">
    <location>
        <begin position="581"/>
        <end position="583"/>
    </location>
</feature>
<feature type="helix" evidence="8">
    <location>
        <begin position="586"/>
        <end position="588"/>
    </location>
</feature>
<feature type="strand" evidence="8">
    <location>
        <begin position="590"/>
        <end position="592"/>
    </location>
</feature>
<feature type="strand" evidence="8">
    <location>
        <begin position="605"/>
        <end position="608"/>
    </location>
</feature>
<feature type="strand" evidence="8">
    <location>
        <begin position="611"/>
        <end position="617"/>
    </location>
</feature>
<feature type="strand" evidence="8">
    <location>
        <begin position="625"/>
        <end position="627"/>
    </location>
</feature>
<feature type="turn" evidence="8">
    <location>
        <begin position="628"/>
        <end position="630"/>
    </location>
</feature>
<feature type="strand" evidence="8">
    <location>
        <begin position="631"/>
        <end position="640"/>
    </location>
</feature>
<feature type="helix" evidence="8">
    <location>
        <begin position="649"/>
        <end position="651"/>
    </location>
</feature>
<feature type="helix" evidence="8">
    <location>
        <begin position="653"/>
        <end position="655"/>
    </location>
</feature>
<feature type="strand" evidence="8">
    <location>
        <begin position="671"/>
        <end position="673"/>
    </location>
</feature>
<feature type="strand" evidence="8">
    <location>
        <begin position="676"/>
        <end position="680"/>
    </location>
</feature>
<dbReference type="EC" id="3.2.1.4"/>
<dbReference type="EMBL" id="L04735">
    <property type="protein sequence ID" value="AAA20892.1"/>
    <property type="molecule type" value="Genomic_DNA"/>
</dbReference>
<dbReference type="EMBL" id="CP000568">
    <property type="protein sequence ID" value="ABN51281.1"/>
    <property type="molecule type" value="Genomic_DNA"/>
</dbReference>
<dbReference type="PIR" id="A47704">
    <property type="entry name" value="A47704"/>
</dbReference>
<dbReference type="RefSeq" id="WP_011837740.1">
    <property type="nucleotide sequence ID" value="NC_009012.1"/>
</dbReference>
<dbReference type="PDB" id="2XFG">
    <property type="method" value="X-ray"/>
    <property type="resolution" value="1.68 A"/>
    <property type="chains" value="A=54-516, B=517-683"/>
</dbReference>
<dbReference type="PDBsum" id="2XFG"/>
<dbReference type="SMR" id="Q02934"/>
<dbReference type="MINT" id="Q02934"/>
<dbReference type="STRING" id="203119.Cthe_0040"/>
<dbReference type="CAZy" id="CBM3">
    <property type="family name" value="Carbohydrate-Binding Module Family 3"/>
</dbReference>
<dbReference type="CAZy" id="GH9">
    <property type="family name" value="Glycoside Hydrolase Family 9"/>
</dbReference>
<dbReference type="GeneID" id="35804239"/>
<dbReference type="KEGG" id="cth:Cthe_0040"/>
<dbReference type="eggNOG" id="COG4447">
    <property type="taxonomic scope" value="Bacteria"/>
</dbReference>
<dbReference type="eggNOG" id="COG4733">
    <property type="taxonomic scope" value="Bacteria"/>
</dbReference>
<dbReference type="HOGENOM" id="CLU_008926_0_2_9"/>
<dbReference type="OrthoDB" id="9758662at2"/>
<dbReference type="UniPathway" id="UPA00696"/>
<dbReference type="EvolutionaryTrace" id="Q02934"/>
<dbReference type="Proteomes" id="UP000002145">
    <property type="component" value="Chromosome"/>
</dbReference>
<dbReference type="GO" id="GO:0008810">
    <property type="term" value="F:cellulase activity"/>
    <property type="evidence" value="ECO:0007669"/>
    <property type="project" value="UniProtKB-EC"/>
</dbReference>
<dbReference type="GO" id="GO:0030248">
    <property type="term" value="F:cellulose binding"/>
    <property type="evidence" value="ECO:0007669"/>
    <property type="project" value="InterPro"/>
</dbReference>
<dbReference type="GO" id="GO:0042802">
    <property type="term" value="F:identical protein binding"/>
    <property type="evidence" value="ECO:0000353"/>
    <property type="project" value="IntAct"/>
</dbReference>
<dbReference type="GO" id="GO:0030245">
    <property type="term" value="P:cellulose catabolic process"/>
    <property type="evidence" value="ECO:0007669"/>
    <property type="project" value="UniProtKB-UniPathway"/>
</dbReference>
<dbReference type="FunFam" id="1.50.10.10:FF:000020">
    <property type="entry name" value="Endoglucanase"/>
    <property type="match status" value="1"/>
</dbReference>
<dbReference type="FunFam" id="2.60.40.710:FF:000001">
    <property type="entry name" value="Endoglucanase 1"/>
    <property type="match status" value="1"/>
</dbReference>
<dbReference type="Gene3D" id="1.50.10.10">
    <property type="match status" value="1"/>
</dbReference>
<dbReference type="Gene3D" id="2.60.40.710">
    <property type="entry name" value="Endoglucanase-like"/>
    <property type="match status" value="2"/>
</dbReference>
<dbReference type="InterPro" id="IPR008928">
    <property type="entry name" value="6-hairpin_glycosidase_sf"/>
</dbReference>
<dbReference type="InterPro" id="IPR012341">
    <property type="entry name" value="6hp_glycosidase-like_sf"/>
</dbReference>
<dbReference type="InterPro" id="IPR008965">
    <property type="entry name" value="CBM2/CBM3_carb-bd_dom_sf"/>
</dbReference>
<dbReference type="InterPro" id="IPR001956">
    <property type="entry name" value="CBM3"/>
</dbReference>
<dbReference type="InterPro" id="IPR036966">
    <property type="entry name" value="CBM3_sf"/>
</dbReference>
<dbReference type="InterPro" id="IPR001701">
    <property type="entry name" value="Glyco_hydro_9"/>
</dbReference>
<dbReference type="InterPro" id="IPR033126">
    <property type="entry name" value="Glyco_hydro_9_Asp/Glu_AS"/>
</dbReference>
<dbReference type="InterPro" id="IPR018221">
    <property type="entry name" value="Glyco_hydro_9_His_AS"/>
</dbReference>
<dbReference type="PANTHER" id="PTHR22298">
    <property type="entry name" value="ENDO-1,4-BETA-GLUCANASE"/>
    <property type="match status" value="1"/>
</dbReference>
<dbReference type="Pfam" id="PF00942">
    <property type="entry name" value="CBM_3"/>
    <property type="match status" value="2"/>
</dbReference>
<dbReference type="Pfam" id="PF00759">
    <property type="entry name" value="Glyco_hydro_9"/>
    <property type="match status" value="1"/>
</dbReference>
<dbReference type="SMART" id="SM01067">
    <property type="entry name" value="CBM_3"/>
    <property type="match status" value="2"/>
</dbReference>
<dbReference type="SUPFAM" id="SSF49384">
    <property type="entry name" value="Carbohydrate-binding domain"/>
    <property type="match status" value="2"/>
</dbReference>
<dbReference type="SUPFAM" id="SSF48208">
    <property type="entry name" value="Six-hairpin glycosidases"/>
    <property type="match status" value="1"/>
</dbReference>
<dbReference type="PROSITE" id="PS51172">
    <property type="entry name" value="CBM3"/>
    <property type="match status" value="2"/>
</dbReference>
<dbReference type="PROSITE" id="PS60032">
    <property type="entry name" value="GH9_1"/>
    <property type="match status" value="1"/>
</dbReference>
<dbReference type="PROSITE" id="PS00592">
    <property type="entry name" value="GH9_2"/>
    <property type="match status" value="1"/>
</dbReference>
<dbReference type="PROSITE" id="PS00698">
    <property type="entry name" value="GH9_3"/>
    <property type="match status" value="1"/>
</dbReference>
<gene>
    <name type="primary">celI</name>
    <name type="ordered locus">Cthe_0040</name>
</gene>
<sequence length="887" mass="98531">MRLVNSLGRRKILLILAVIVAFSTVLLFAKLWGRKTSSTLDEVGSKTHGDLTAENKNGGYLPEEEIPDQPPATGAFNYGEALQKAIFFYECQRSGKLDPSTLRLNWRGDSGLDDGKDAGIDLTGGWYDAGDHVKFNLPMSYSAAMLGWAVYEYEDAFKQSGQYNHILNNIKWACDYFIKCHPEKDVYYYQVGDGHADHAWWGPAEVMPMERPSYKVDRSSPGSTVVAETSAALAIASIIFKKVDGEYSKECLKHAKELFEFADTTKSDDGYTAANGFYNSWSGFYDELSWAAVWLYLATNDSSYLDKAESYSDKWGYEPQTNIPKYKWAQCWDDVTYGTYLLLARIKNDNGKYKEAIERHLDWWTTGYNGERITYTPKGLAWLDQWGSLRYATTTAFLACVYSDWENGDKEKAKTYLEFARSQADYALGSTGRSFVVGFGENPPKRPHHRTAHGSWADSQMEPPEHRHVLYGALVGGPDSTDNYTDDISNYTCNEVACDYNAGFVGLLAKMYKLYGGSPDPKFNGIEEVPEDEIFVEAGVNASGNNFIEIKAIVNNKSGWPARVCENLSFRYFINIEEIVNAGKSASDLQVSSSYNQGAKLSDVKHYKDNIYYVEVDLSGTKIYPGGQSAYKKEVQFRISAPEGTVFNPENDYSYQGLSAGTVVKSEYIPVYDAGVLVFGREPGSASKSTSKDNGLSKATPTVKTESQPTAKHTQNPASDFKTPANQNSVKKDQGIKGEVVLQYANGNAGATSNSINPRFKIINNGTKAINLSDVKIRYYYTKEGGASQNFWCDWSSAGNSNVTGNFFNLSSPKEGADTCLEVGFGSGAGTLDPGGSVEVQIRFSKEDWSNYNQSNDYSFNPSASDYTDWNRVTLYISNKLVYGKEP</sequence>
<name>GUNI_ACET2</name>
<organism>
    <name type="scientific">Acetivibrio thermocellus (strain ATCC 27405 / DSM 1237 / JCM 9322 / NBRC 103400 / NCIMB 10682 / NRRL B-4536 / VPI 7372)</name>
    <name type="common">Clostridium thermocellum</name>
    <dbReference type="NCBI Taxonomy" id="203119"/>
    <lineage>
        <taxon>Bacteria</taxon>
        <taxon>Bacillati</taxon>
        <taxon>Bacillota</taxon>
        <taxon>Clostridia</taxon>
        <taxon>Eubacteriales</taxon>
        <taxon>Oscillospiraceae</taxon>
        <taxon>Acetivibrio</taxon>
    </lineage>
</organism>